<proteinExistence type="evidence at transcript level"/>
<comment type="similarity">
    <text evidence="3">Belongs to the universal ribosomal protein uL2 family.</text>
</comment>
<feature type="chain" id="PRO_0000239928" description="Large ribosomal subunit protein uL2x">
    <location>
        <begin position="1"/>
        <end position="258"/>
    </location>
</feature>
<feature type="region of interest" description="Disordered" evidence="1">
    <location>
        <begin position="211"/>
        <end position="231"/>
    </location>
</feature>
<sequence>MGRVIRAQRKGAGSVFKSHTHHRKGPAKFRSLDFGERNGYLKGVVTEIIHDPGRGAPLARVAFRHPFRFKKQKELFVAAEGMYTGQFLYCGKKATLVVGNVLPLRSIPEGAVICNVEHHVGDRGVFARASGDYAIVIAHNPDNDTSRIKLPSGSKKIVPSGCRAMIGQVAGGGRTEKPMLKAGNAYHKYRVKRNCWPKVRGVAMNPVEHPHGGGNHQHIGHASTVRRDAPPGKKVGLIAARRTGRLRGQAAALASKAD</sequence>
<name>RL83_ARATH</name>
<evidence type="ECO:0000256" key="1">
    <source>
        <dbReference type="SAM" id="MobiDB-lite"/>
    </source>
</evidence>
<evidence type="ECO:0000303" key="2">
    <source>
    </source>
</evidence>
<evidence type="ECO:0000305" key="3"/>
<accession>Q42064</accession>
<accession>Q7DLL7</accession>
<protein>
    <recommendedName>
        <fullName evidence="2">Large ribosomal subunit protein uL2x</fullName>
    </recommendedName>
    <alternativeName>
        <fullName>60S ribosomal protein L8-3</fullName>
    </alternativeName>
</protein>
<keyword id="KW-1185">Reference proteome</keyword>
<keyword id="KW-0687">Ribonucleoprotein</keyword>
<keyword id="KW-0689">Ribosomal protein</keyword>
<dbReference type="EMBL" id="AL022141">
    <property type="protein sequence ID" value="CAA18119.1"/>
    <property type="molecule type" value="Genomic_DNA"/>
</dbReference>
<dbReference type="EMBL" id="AL022373">
    <property type="protein sequence ID" value="CAA18507.1"/>
    <property type="molecule type" value="Genomic_DNA"/>
</dbReference>
<dbReference type="EMBL" id="AL161588">
    <property type="protein sequence ID" value="CAB81522.1"/>
    <property type="molecule type" value="Genomic_DNA"/>
</dbReference>
<dbReference type="EMBL" id="CP002687">
    <property type="protein sequence ID" value="AEE86623.1"/>
    <property type="molecule type" value="Genomic_DNA"/>
</dbReference>
<dbReference type="EMBL" id="AF361610">
    <property type="protein sequence ID" value="AAK32778.1"/>
    <property type="molecule type" value="mRNA"/>
</dbReference>
<dbReference type="EMBL" id="AF367335">
    <property type="protein sequence ID" value="AAK32922.1"/>
    <property type="molecule type" value="mRNA"/>
</dbReference>
<dbReference type="EMBL" id="AY058221">
    <property type="protein sequence ID" value="AAL15395.1"/>
    <property type="molecule type" value="mRNA"/>
</dbReference>
<dbReference type="EMBL" id="Z25971">
    <property type="protein sequence ID" value="CAA81122.1"/>
    <property type="molecule type" value="mRNA"/>
</dbReference>
<dbReference type="PIR" id="T04582">
    <property type="entry name" value="T04582"/>
</dbReference>
<dbReference type="RefSeq" id="NP_195336.1">
    <property type="nucleotide sequence ID" value="NM_119780.3"/>
</dbReference>
<dbReference type="SMR" id="Q42064"/>
<dbReference type="BioGRID" id="15052">
    <property type="interactions" value="161"/>
</dbReference>
<dbReference type="FunCoup" id="Q42064">
    <property type="interactions" value="3412"/>
</dbReference>
<dbReference type="STRING" id="3702.Q42064"/>
<dbReference type="iPTMnet" id="Q42064"/>
<dbReference type="PaxDb" id="3702-AT4G36130.1"/>
<dbReference type="ProteomicsDB" id="228125"/>
<dbReference type="EnsemblPlants" id="AT4G36130.1">
    <property type="protein sequence ID" value="AT4G36130.1"/>
    <property type="gene ID" value="AT4G36130"/>
</dbReference>
<dbReference type="GeneID" id="829770"/>
<dbReference type="Gramene" id="AT4G36130.1">
    <property type="protein sequence ID" value="AT4G36130.1"/>
    <property type="gene ID" value="AT4G36130"/>
</dbReference>
<dbReference type="KEGG" id="ath:AT4G36130"/>
<dbReference type="Araport" id="AT4G36130"/>
<dbReference type="TAIR" id="AT4G36130"/>
<dbReference type="eggNOG" id="KOG2309">
    <property type="taxonomic scope" value="Eukaryota"/>
</dbReference>
<dbReference type="HOGENOM" id="CLU_036235_0_3_1"/>
<dbReference type="InParanoid" id="Q42064"/>
<dbReference type="OMA" id="GGRHPCT"/>
<dbReference type="OrthoDB" id="1480648at2759"/>
<dbReference type="PhylomeDB" id="Q42064"/>
<dbReference type="CD-CODE" id="4299E36E">
    <property type="entry name" value="Nucleolus"/>
</dbReference>
<dbReference type="PRO" id="PR:Q42064"/>
<dbReference type="Proteomes" id="UP000006548">
    <property type="component" value="Chromosome 4"/>
</dbReference>
<dbReference type="ExpressionAtlas" id="Q42064">
    <property type="expression patterns" value="baseline and differential"/>
</dbReference>
<dbReference type="GO" id="GO:0022625">
    <property type="term" value="C:cytosolic large ribosomal subunit"/>
    <property type="evidence" value="ECO:0007005"/>
    <property type="project" value="TAIR"/>
</dbReference>
<dbReference type="GO" id="GO:0022626">
    <property type="term" value="C:cytosolic ribosome"/>
    <property type="evidence" value="ECO:0007005"/>
    <property type="project" value="TAIR"/>
</dbReference>
<dbReference type="GO" id="GO:0005886">
    <property type="term" value="C:plasma membrane"/>
    <property type="evidence" value="ECO:0007005"/>
    <property type="project" value="TAIR"/>
</dbReference>
<dbReference type="GO" id="GO:0005773">
    <property type="term" value="C:vacuole"/>
    <property type="evidence" value="ECO:0007005"/>
    <property type="project" value="TAIR"/>
</dbReference>
<dbReference type="GO" id="GO:0003729">
    <property type="term" value="F:mRNA binding"/>
    <property type="evidence" value="ECO:0000314"/>
    <property type="project" value="TAIR"/>
</dbReference>
<dbReference type="GO" id="GO:0003735">
    <property type="term" value="F:structural constituent of ribosome"/>
    <property type="evidence" value="ECO:0000314"/>
    <property type="project" value="CAFA"/>
</dbReference>
<dbReference type="GO" id="GO:0006412">
    <property type="term" value="P:translation"/>
    <property type="evidence" value="ECO:0007669"/>
    <property type="project" value="InterPro"/>
</dbReference>
<dbReference type="FunFam" id="2.40.50.140:FF:000020">
    <property type="entry name" value="60S ribosomal protein L2"/>
    <property type="match status" value="1"/>
</dbReference>
<dbReference type="FunFam" id="4.10.950.10:FF:000002">
    <property type="entry name" value="60S ribosomal protein L2"/>
    <property type="match status" value="1"/>
</dbReference>
<dbReference type="FunFam" id="2.30.30.30:FF:000006">
    <property type="entry name" value="60S ribosomal protein L8"/>
    <property type="match status" value="1"/>
</dbReference>
<dbReference type="Gene3D" id="2.30.30.30">
    <property type="match status" value="1"/>
</dbReference>
<dbReference type="Gene3D" id="2.40.50.140">
    <property type="entry name" value="Nucleic acid-binding proteins"/>
    <property type="match status" value="1"/>
</dbReference>
<dbReference type="Gene3D" id="4.10.950.10">
    <property type="entry name" value="Ribosomal protein L2, domain 3"/>
    <property type="match status" value="1"/>
</dbReference>
<dbReference type="HAMAP" id="MF_01320_A">
    <property type="entry name" value="Ribosomal_uL2_A"/>
    <property type="match status" value="1"/>
</dbReference>
<dbReference type="InterPro" id="IPR012340">
    <property type="entry name" value="NA-bd_OB-fold"/>
</dbReference>
<dbReference type="InterPro" id="IPR014722">
    <property type="entry name" value="Rib_uL2_dom2"/>
</dbReference>
<dbReference type="InterPro" id="IPR002171">
    <property type="entry name" value="Ribosomal_uL2"/>
</dbReference>
<dbReference type="InterPro" id="IPR023672">
    <property type="entry name" value="Ribosomal_uL2_arc_euk"/>
</dbReference>
<dbReference type="InterPro" id="IPR022669">
    <property type="entry name" value="Ribosomal_uL2_C"/>
</dbReference>
<dbReference type="InterPro" id="IPR022671">
    <property type="entry name" value="Ribosomal_uL2_CS"/>
</dbReference>
<dbReference type="InterPro" id="IPR014726">
    <property type="entry name" value="Ribosomal_uL2_dom3"/>
</dbReference>
<dbReference type="InterPro" id="IPR022666">
    <property type="entry name" value="Ribosomal_uL2_RNA-bd_dom"/>
</dbReference>
<dbReference type="InterPro" id="IPR008991">
    <property type="entry name" value="Translation_prot_SH3-like_sf"/>
</dbReference>
<dbReference type="NCBIfam" id="NF007180">
    <property type="entry name" value="PRK09612.1"/>
    <property type="match status" value="1"/>
</dbReference>
<dbReference type="PANTHER" id="PTHR13691:SF16">
    <property type="entry name" value="LARGE RIBOSOMAL SUBUNIT PROTEIN UL2"/>
    <property type="match status" value="1"/>
</dbReference>
<dbReference type="PANTHER" id="PTHR13691">
    <property type="entry name" value="RIBOSOMAL PROTEIN L2"/>
    <property type="match status" value="1"/>
</dbReference>
<dbReference type="Pfam" id="PF00181">
    <property type="entry name" value="Ribosomal_L2"/>
    <property type="match status" value="1"/>
</dbReference>
<dbReference type="Pfam" id="PF03947">
    <property type="entry name" value="Ribosomal_L2_C"/>
    <property type="match status" value="1"/>
</dbReference>
<dbReference type="PIRSF" id="PIRSF002158">
    <property type="entry name" value="Ribosomal_L2"/>
    <property type="match status" value="1"/>
</dbReference>
<dbReference type="SMART" id="SM01383">
    <property type="entry name" value="Ribosomal_L2"/>
    <property type="match status" value="1"/>
</dbReference>
<dbReference type="SMART" id="SM01382">
    <property type="entry name" value="Ribosomal_L2_C"/>
    <property type="match status" value="1"/>
</dbReference>
<dbReference type="SUPFAM" id="SSF50249">
    <property type="entry name" value="Nucleic acid-binding proteins"/>
    <property type="match status" value="1"/>
</dbReference>
<dbReference type="SUPFAM" id="SSF50104">
    <property type="entry name" value="Translation proteins SH3-like domain"/>
    <property type="match status" value="1"/>
</dbReference>
<dbReference type="PROSITE" id="PS00467">
    <property type="entry name" value="RIBOSOMAL_L2"/>
    <property type="match status" value="1"/>
</dbReference>
<reference key="1">
    <citation type="journal article" date="1999" name="Nature">
        <title>Sequence and analysis of chromosome 4 of the plant Arabidopsis thaliana.</title>
        <authorList>
            <person name="Mayer K.F.X."/>
            <person name="Schueller C."/>
            <person name="Wambutt R."/>
            <person name="Murphy G."/>
            <person name="Volckaert G."/>
            <person name="Pohl T."/>
            <person name="Duesterhoeft A."/>
            <person name="Stiekema W."/>
            <person name="Entian K.-D."/>
            <person name="Terryn N."/>
            <person name="Harris B."/>
            <person name="Ansorge W."/>
            <person name="Brandt P."/>
            <person name="Grivell L.A."/>
            <person name="Rieger M."/>
            <person name="Weichselgartner M."/>
            <person name="de Simone V."/>
            <person name="Obermaier B."/>
            <person name="Mache R."/>
            <person name="Mueller M."/>
            <person name="Kreis M."/>
            <person name="Delseny M."/>
            <person name="Puigdomenech P."/>
            <person name="Watson M."/>
            <person name="Schmidtheini T."/>
            <person name="Reichert B."/>
            <person name="Portetelle D."/>
            <person name="Perez-Alonso M."/>
            <person name="Boutry M."/>
            <person name="Bancroft I."/>
            <person name="Vos P."/>
            <person name="Hoheisel J."/>
            <person name="Zimmermann W."/>
            <person name="Wedler H."/>
            <person name="Ridley P."/>
            <person name="Langham S.-A."/>
            <person name="McCullagh B."/>
            <person name="Bilham L."/>
            <person name="Robben J."/>
            <person name="van der Schueren J."/>
            <person name="Grymonprez B."/>
            <person name="Chuang Y.-J."/>
            <person name="Vandenbussche F."/>
            <person name="Braeken M."/>
            <person name="Weltjens I."/>
            <person name="Voet M."/>
            <person name="Bastiaens I."/>
            <person name="Aert R."/>
            <person name="Defoor E."/>
            <person name="Weitzenegger T."/>
            <person name="Bothe G."/>
            <person name="Ramsperger U."/>
            <person name="Hilbert H."/>
            <person name="Braun M."/>
            <person name="Holzer E."/>
            <person name="Brandt A."/>
            <person name="Peters S."/>
            <person name="van Staveren M."/>
            <person name="Dirkse W."/>
            <person name="Mooijman P."/>
            <person name="Klein Lankhorst R."/>
            <person name="Rose M."/>
            <person name="Hauf J."/>
            <person name="Koetter P."/>
            <person name="Berneiser S."/>
            <person name="Hempel S."/>
            <person name="Feldpausch M."/>
            <person name="Lamberth S."/>
            <person name="Van den Daele H."/>
            <person name="De Keyser A."/>
            <person name="Buysshaert C."/>
            <person name="Gielen J."/>
            <person name="Villarroel R."/>
            <person name="De Clercq R."/>
            <person name="van Montagu M."/>
            <person name="Rogers J."/>
            <person name="Cronin A."/>
            <person name="Quail M.A."/>
            <person name="Bray-Allen S."/>
            <person name="Clark L."/>
            <person name="Doggett J."/>
            <person name="Hall S."/>
            <person name="Kay M."/>
            <person name="Lennard N."/>
            <person name="McLay K."/>
            <person name="Mayes R."/>
            <person name="Pettett A."/>
            <person name="Rajandream M.A."/>
            <person name="Lyne M."/>
            <person name="Benes V."/>
            <person name="Rechmann S."/>
            <person name="Borkova D."/>
            <person name="Bloecker H."/>
            <person name="Scharfe M."/>
            <person name="Grimm M."/>
            <person name="Loehnert T.-H."/>
            <person name="Dose S."/>
            <person name="de Haan M."/>
            <person name="Maarse A.C."/>
            <person name="Schaefer M."/>
            <person name="Mueller-Auer S."/>
            <person name="Gabel C."/>
            <person name="Fuchs M."/>
            <person name="Fartmann B."/>
            <person name="Granderath K."/>
            <person name="Dauner D."/>
            <person name="Herzl A."/>
            <person name="Neumann S."/>
            <person name="Argiriou A."/>
            <person name="Vitale D."/>
            <person name="Liguori R."/>
            <person name="Piravandi E."/>
            <person name="Massenet O."/>
            <person name="Quigley F."/>
            <person name="Clabauld G."/>
            <person name="Muendlein A."/>
            <person name="Felber R."/>
            <person name="Schnabl S."/>
            <person name="Hiller R."/>
            <person name="Schmidt W."/>
            <person name="Lecharny A."/>
            <person name="Aubourg S."/>
            <person name="Chefdor F."/>
            <person name="Cooke R."/>
            <person name="Berger C."/>
            <person name="Monfort A."/>
            <person name="Casacuberta E."/>
            <person name="Gibbons T."/>
            <person name="Weber N."/>
            <person name="Vandenbol M."/>
            <person name="Bargues M."/>
            <person name="Terol J."/>
            <person name="Torres A."/>
            <person name="Perez-Perez A."/>
            <person name="Purnelle B."/>
            <person name="Bent E."/>
            <person name="Johnson S."/>
            <person name="Tacon D."/>
            <person name="Jesse T."/>
            <person name="Heijnen L."/>
            <person name="Schwarz S."/>
            <person name="Scholler P."/>
            <person name="Heber S."/>
            <person name="Francs P."/>
            <person name="Bielke C."/>
            <person name="Frishman D."/>
            <person name="Haase D."/>
            <person name="Lemcke K."/>
            <person name="Mewes H.-W."/>
            <person name="Stocker S."/>
            <person name="Zaccaria P."/>
            <person name="Bevan M."/>
            <person name="Wilson R.K."/>
            <person name="de la Bastide M."/>
            <person name="Habermann K."/>
            <person name="Parnell L."/>
            <person name="Dedhia N."/>
            <person name="Gnoj L."/>
            <person name="Schutz K."/>
            <person name="Huang E."/>
            <person name="Spiegel L."/>
            <person name="Sekhon M."/>
            <person name="Murray J."/>
            <person name="Sheet P."/>
            <person name="Cordes M."/>
            <person name="Abu-Threideh J."/>
            <person name="Stoneking T."/>
            <person name="Kalicki J."/>
            <person name="Graves T."/>
            <person name="Harmon G."/>
            <person name="Edwards J."/>
            <person name="Latreille P."/>
            <person name="Courtney L."/>
            <person name="Cloud J."/>
            <person name="Abbott A."/>
            <person name="Scott K."/>
            <person name="Johnson D."/>
            <person name="Minx P."/>
            <person name="Bentley D."/>
            <person name="Fulton B."/>
            <person name="Miller N."/>
            <person name="Greco T."/>
            <person name="Kemp K."/>
            <person name="Kramer J."/>
            <person name="Fulton L."/>
            <person name="Mardis E."/>
            <person name="Dante M."/>
            <person name="Pepin K."/>
            <person name="Hillier L.W."/>
            <person name="Nelson J."/>
            <person name="Spieth J."/>
            <person name="Ryan E."/>
            <person name="Andrews S."/>
            <person name="Geisel C."/>
            <person name="Layman D."/>
            <person name="Du H."/>
            <person name="Ali J."/>
            <person name="Berghoff A."/>
            <person name="Jones K."/>
            <person name="Drone K."/>
            <person name="Cotton M."/>
            <person name="Joshu C."/>
            <person name="Antonoiu B."/>
            <person name="Zidanic M."/>
            <person name="Strong C."/>
            <person name="Sun H."/>
            <person name="Lamar B."/>
            <person name="Yordan C."/>
            <person name="Ma P."/>
            <person name="Zhong J."/>
            <person name="Preston R."/>
            <person name="Vil D."/>
            <person name="Shekher M."/>
            <person name="Matero A."/>
            <person name="Shah R."/>
            <person name="Swaby I.K."/>
            <person name="O'Shaughnessy A."/>
            <person name="Rodriguez M."/>
            <person name="Hoffman J."/>
            <person name="Till S."/>
            <person name="Granat S."/>
            <person name="Shohdy N."/>
            <person name="Hasegawa A."/>
            <person name="Hameed A."/>
            <person name="Lodhi M."/>
            <person name="Johnson A."/>
            <person name="Chen E."/>
            <person name="Marra M.A."/>
            <person name="Martienssen R."/>
            <person name="McCombie W.R."/>
        </authorList>
    </citation>
    <scope>NUCLEOTIDE SEQUENCE [LARGE SCALE GENOMIC DNA]</scope>
    <source>
        <strain>cv. Columbia</strain>
    </source>
</reference>
<reference key="2">
    <citation type="journal article" date="2017" name="Plant J.">
        <title>Araport11: a complete reannotation of the Arabidopsis thaliana reference genome.</title>
        <authorList>
            <person name="Cheng C.Y."/>
            <person name="Krishnakumar V."/>
            <person name="Chan A.P."/>
            <person name="Thibaud-Nissen F."/>
            <person name="Schobel S."/>
            <person name="Town C.D."/>
        </authorList>
    </citation>
    <scope>GENOME REANNOTATION</scope>
    <source>
        <strain>cv. Columbia</strain>
    </source>
</reference>
<reference key="3">
    <citation type="journal article" date="2003" name="Science">
        <title>Empirical analysis of transcriptional activity in the Arabidopsis genome.</title>
        <authorList>
            <person name="Yamada K."/>
            <person name="Lim J."/>
            <person name="Dale J.M."/>
            <person name="Chen H."/>
            <person name="Shinn P."/>
            <person name="Palm C.J."/>
            <person name="Southwick A.M."/>
            <person name="Wu H.C."/>
            <person name="Kim C.J."/>
            <person name="Nguyen M."/>
            <person name="Pham P.K."/>
            <person name="Cheuk R.F."/>
            <person name="Karlin-Newmann G."/>
            <person name="Liu S.X."/>
            <person name="Lam B."/>
            <person name="Sakano H."/>
            <person name="Wu T."/>
            <person name="Yu G."/>
            <person name="Miranda M."/>
            <person name="Quach H.L."/>
            <person name="Tripp M."/>
            <person name="Chang C.H."/>
            <person name="Lee J.M."/>
            <person name="Toriumi M.J."/>
            <person name="Chan M.M."/>
            <person name="Tang C.C."/>
            <person name="Onodera C.S."/>
            <person name="Deng J.M."/>
            <person name="Akiyama K."/>
            <person name="Ansari Y."/>
            <person name="Arakawa T."/>
            <person name="Banh J."/>
            <person name="Banno F."/>
            <person name="Bowser L."/>
            <person name="Brooks S.Y."/>
            <person name="Carninci P."/>
            <person name="Chao Q."/>
            <person name="Choy N."/>
            <person name="Enju A."/>
            <person name="Goldsmith A.D."/>
            <person name="Gurjal M."/>
            <person name="Hansen N.F."/>
            <person name="Hayashizaki Y."/>
            <person name="Johnson-Hopson C."/>
            <person name="Hsuan V.W."/>
            <person name="Iida K."/>
            <person name="Karnes M."/>
            <person name="Khan S."/>
            <person name="Koesema E."/>
            <person name="Ishida J."/>
            <person name="Jiang P.X."/>
            <person name="Jones T."/>
            <person name="Kawai J."/>
            <person name="Kamiya A."/>
            <person name="Meyers C."/>
            <person name="Nakajima M."/>
            <person name="Narusaka M."/>
            <person name="Seki M."/>
            <person name="Sakurai T."/>
            <person name="Satou M."/>
            <person name="Tamse R."/>
            <person name="Vaysberg M."/>
            <person name="Wallender E.K."/>
            <person name="Wong C."/>
            <person name="Yamamura Y."/>
            <person name="Yuan S."/>
            <person name="Shinozaki K."/>
            <person name="Davis R.W."/>
            <person name="Theologis A."/>
            <person name="Ecker J.R."/>
        </authorList>
    </citation>
    <scope>NUCLEOTIDE SEQUENCE [LARGE SCALE MRNA]</scope>
    <source>
        <strain>cv. Columbia</strain>
    </source>
</reference>
<reference key="4">
    <citation type="journal article" date="1996" name="Plant J.">
        <title>Further progress towards a catalogue of all Arabidopsis genes: analysis of a set of 5000 non-redundant ESTs.</title>
        <authorList>
            <person name="Cooke R."/>
            <person name="Raynal M."/>
            <person name="Laudie M."/>
            <person name="Grellet F."/>
            <person name="Delseny M."/>
            <person name="Morris P.-C."/>
            <person name="Guerrier D."/>
            <person name="Giraudat J."/>
            <person name="Quigley F."/>
            <person name="Clabault G."/>
            <person name="Li Y.-F."/>
            <person name="Mache R."/>
            <person name="Krivitzky M."/>
            <person name="Gy I.J.-J."/>
            <person name="Kreis M."/>
            <person name="Lecharny A."/>
            <person name="Parmentier Y."/>
            <person name="Marbach J."/>
            <person name="Fleck J."/>
            <person name="Clement B."/>
            <person name="Philipps G."/>
            <person name="Herve C."/>
            <person name="Bardet C."/>
            <person name="Tremousaygue D."/>
            <person name="Lescure B."/>
            <person name="Lacomme C."/>
            <person name="Roby D."/>
            <person name="Jourjon M.-F."/>
            <person name="Chabrier P."/>
            <person name="Charpenteau J.-L."/>
            <person name="Desprez T."/>
            <person name="Amselem J."/>
            <person name="Chiapello H."/>
            <person name="Hoefte H."/>
        </authorList>
    </citation>
    <scope>NUCLEOTIDE SEQUENCE [LARGE SCALE MRNA] OF 1-99</scope>
    <source>
        <strain>cv. Columbia</strain>
    </source>
</reference>
<reference key="5">
    <citation type="journal article" date="2001" name="Plant Physiol.">
        <title>The organization of cytoplasmic ribosomal protein genes in the Arabidopsis genome.</title>
        <authorList>
            <person name="Barakat A."/>
            <person name="Szick-Miranda K."/>
            <person name="Chang I.-F."/>
            <person name="Guyot R."/>
            <person name="Blanc G."/>
            <person name="Cooke R."/>
            <person name="Delseny M."/>
            <person name="Bailey-Serres J."/>
        </authorList>
    </citation>
    <scope>GENE FAMILY ORGANIZATION</scope>
    <scope>NOMENCLATURE</scope>
</reference>
<reference key="6">
    <citation type="journal article" date="2023" name="Plant Cell">
        <title>An updated nomenclature for plant ribosomal protein genes.</title>
        <authorList>
            <person name="Scarpin M.R."/>
            <person name="Busche M."/>
            <person name="Martinez R.E."/>
            <person name="Harper L.C."/>
            <person name="Reiser L."/>
            <person name="Szakonyi D."/>
            <person name="Merchante C."/>
            <person name="Lan T."/>
            <person name="Xiong W."/>
            <person name="Mo B."/>
            <person name="Tang G."/>
            <person name="Chen X."/>
            <person name="Bailey-Serres J."/>
            <person name="Browning K.S."/>
            <person name="Brunkard J.O."/>
        </authorList>
    </citation>
    <scope>NOMENCLATURE</scope>
</reference>
<gene>
    <name type="primary">RPL8C</name>
    <name type="ordered locus">At4g36130</name>
    <name type="ORF">F23E13.20</name>
    <name type="ORF">T19K4.260</name>
</gene>
<organism>
    <name type="scientific">Arabidopsis thaliana</name>
    <name type="common">Mouse-ear cress</name>
    <dbReference type="NCBI Taxonomy" id="3702"/>
    <lineage>
        <taxon>Eukaryota</taxon>
        <taxon>Viridiplantae</taxon>
        <taxon>Streptophyta</taxon>
        <taxon>Embryophyta</taxon>
        <taxon>Tracheophyta</taxon>
        <taxon>Spermatophyta</taxon>
        <taxon>Magnoliopsida</taxon>
        <taxon>eudicotyledons</taxon>
        <taxon>Gunneridae</taxon>
        <taxon>Pentapetalae</taxon>
        <taxon>rosids</taxon>
        <taxon>malvids</taxon>
        <taxon>Brassicales</taxon>
        <taxon>Brassicaceae</taxon>
        <taxon>Camelineae</taxon>
        <taxon>Arabidopsis</taxon>
    </lineage>
</organism>